<dbReference type="EC" id="4.2.1.2" evidence="1"/>
<dbReference type="EMBL" id="BA000033">
    <property type="protein sequence ID" value="BAB95657.1"/>
    <property type="molecule type" value="Genomic_DNA"/>
</dbReference>
<dbReference type="RefSeq" id="WP_000116229.1">
    <property type="nucleotide sequence ID" value="NC_003923.1"/>
</dbReference>
<dbReference type="SMR" id="Q8NVV1"/>
<dbReference type="KEGG" id="sam:MW1792"/>
<dbReference type="HOGENOM" id="CLU_021594_4_1_9"/>
<dbReference type="UniPathway" id="UPA00223">
    <property type="reaction ID" value="UER01007"/>
</dbReference>
<dbReference type="GO" id="GO:0005737">
    <property type="term" value="C:cytoplasm"/>
    <property type="evidence" value="ECO:0007669"/>
    <property type="project" value="UniProtKB-SubCell"/>
</dbReference>
<dbReference type="GO" id="GO:0004333">
    <property type="term" value="F:fumarate hydratase activity"/>
    <property type="evidence" value="ECO:0007669"/>
    <property type="project" value="UniProtKB-UniRule"/>
</dbReference>
<dbReference type="GO" id="GO:0006106">
    <property type="term" value="P:fumarate metabolic process"/>
    <property type="evidence" value="ECO:0007669"/>
    <property type="project" value="InterPro"/>
</dbReference>
<dbReference type="GO" id="GO:0006108">
    <property type="term" value="P:malate metabolic process"/>
    <property type="evidence" value="ECO:0007669"/>
    <property type="project" value="TreeGrafter"/>
</dbReference>
<dbReference type="GO" id="GO:0006099">
    <property type="term" value="P:tricarboxylic acid cycle"/>
    <property type="evidence" value="ECO:0007669"/>
    <property type="project" value="UniProtKB-UniRule"/>
</dbReference>
<dbReference type="CDD" id="cd01362">
    <property type="entry name" value="Fumarase_classII"/>
    <property type="match status" value="1"/>
</dbReference>
<dbReference type="FunFam" id="1.10.40.30:FF:000002">
    <property type="entry name" value="Fumarate hydratase class II"/>
    <property type="match status" value="1"/>
</dbReference>
<dbReference type="FunFam" id="1.10.275.10:FF:000001">
    <property type="entry name" value="Fumarate hydratase, mitochondrial"/>
    <property type="match status" value="1"/>
</dbReference>
<dbReference type="FunFam" id="1.20.200.10:FF:000001">
    <property type="entry name" value="Fumarate hydratase, mitochondrial"/>
    <property type="match status" value="1"/>
</dbReference>
<dbReference type="Gene3D" id="1.10.40.30">
    <property type="entry name" value="Fumarase/aspartase (C-terminal domain)"/>
    <property type="match status" value="1"/>
</dbReference>
<dbReference type="Gene3D" id="1.20.200.10">
    <property type="entry name" value="Fumarase/aspartase (Central domain)"/>
    <property type="match status" value="1"/>
</dbReference>
<dbReference type="Gene3D" id="1.10.275.10">
    <property type="entry name" value="Fumarase/aspartase (N-terminal domain)"/>
    <property type="match status" value="1"/>
</dbReference>
<dbReference type="HAMAP" id="MF_00743">
    <property type="entry name" value="FumaraseC"/>
    <property type="match status" value="1"/>
</dbReference>
<dbReference type="InterPro" id="IPR005677">
    <property type="entry name" value="Fum_hydII"/>
</dbReference>
<dbReference type="InterPro" id="IPR024083">
    <property type="entry name" value="Fumarase/histidase_N"/>
</dbReference>
<dbReference type="InterPro" id="IPR018951">
    <property type="entry name" value="Fumarase_C_C"/>
</dbReference>
<dbReference type="InterPro" id="IPR020557">
    <property type="entry name" value="Fumarate_lyase_CS"/>
</dbReference>
<dbReference type="InterPro" id="IPR000362">
    <property type="entry name" value="Fumarate_lyase_fam"/>
</dbReference>
<dbReference type="InterPro" id="IPR022761">
    <property type="entry name" value="Fumarate_lyase_N"/>
</dbReference>
<dbReference type="InterPro" id="IPR008948">
    <property type="entry name" value="L-Aspartase-like"/>
</dbReference>
<dbReference type="NCBIfam" id="TIGR00979">
    <property type="entry name" value="fumC_II"/>
    <property type="match status" value="1"/>
</dbReference>
<dbReference type="NCBIfam" id="NF008909">
    <property type="entry name" value="PRK12273.1"/>
    <property type="match status" value="1"/>
</dbReference>
<dbReference type="PANTHER" id="PTHR11444">
    <property type="entry name" value="ASPARTATEAMMONIA/ARGININOSUCCINATE/ADENYLOSUCCINATE LYASE"/>
    <property type="match status" value="1"/>
</dbReference>
<dbReference type="PANTHER" id="PTHR11444:SF1">
    <property type="entry name" value="FUMARATE HYDRATASE, MITOCHONDRIAL"/>
    <property type="match status" value="1"/>
</dbReference>
<dbReference type="Pfam" id="PF10415">
    <property type="entry name" value="FumaraseC_C"/>
    <property type="match status" value="1"/>
</dbReference>
<dbReference type="Pfam" id="PF00206">
    <property type="entry name" value="Lyase_1"/>
    <property type="match status" value="1"/>
</dbReference>
<dbReference type="PRINTS" id="PR00145">
    <property type="entry name" value="ARGSUCLYASE"/>
</dbReference>
<dbReference type="PRINTS" id="PR00149">
    <property type="entry name" value="FUMRATELYASE"/>
</dbReference>
<dbReference type="SUPFAM" id="SSF48557">
    <property type="entry name" value="L-aspartase-like"/>
    <property type="match status" value="1"/>
</dbReference>
<dbReference type="PROSITE" id="PS00163">
    <property type="entry name" value="FUMARATE_LYASES"/>
    <property type="match status" value="1"/>
</dbReference>
<feature type="chain" id="PRO_0000161316" description="Fumarate hydratase class II">
    <location>
        <begin position="1"/>
        <end position="461"/>
    </location>
</feature>
<feature type="active site" description="Proton donor/acceptor" evidence="1">
    <location>
        <position position="186"/>
    </location>
</feature>
<feature type="active site" evidence="1">
    <location>
        <position position="316"/>
    </location>
</feature>
<feature type="binding site" evidence="1">
    <location>
        <begin position="97"/>
        <end position="99"/>
    </location>
    <ligand>
        <name>substrate</name>
    </ligand>
</feature>
<feature type="binding site" description="in site B" evidence="1">
    <location>
        <begin position="127"/>
        <end position="130"/>
    </location>
    <ligand>
        <name>substrate</name>
    </ligand>
</feature>
<feature type="binding site" evidence="1">
    <location>
        <begin position="137"/>
        <end position="139"/>
    </location>
    <ligand>
        <name>substrate</name>
    </ligand>
</feature>
<feature type="binding site" evidence="1">
    <location>
        <position position="185"/>
    </location>
    <ligand>
        <name>substrate</name>
    </ligand>
</feature>
<feature type="binding site" evidence="1">
    <location>
        <position position="317"/>
    </location>
    <ligand>
        <name>substrate</name>
    </ligand>
</feature>
<feature type="binding site" evidence="1">
    <location>
        <begin position="322"/>
        <end position="324"/>
    </location>
    <ligand>
        <name>substrate</name>
    </ligand>
</feature>
<feature type="site" description="Important for catalytic activity" evidence="1">
    <location>
        <position position="329"/>
    </location>
</feature>
<comment type="function">
    <text evidence="1">Involved in the TCA cycle. Catalyzes the stereospecific interconversion of fumarate to L-malate.</text>
</comment>
<comment type="catalytic activity">
    <reaction evidence="1">
        <text>(S)-malate = fumarate + H2O</text>
        <dbReference type="Rhea" id="RHEA:12460"/>
        <dbReference type="ChEBI" id="CHEBI:15377"/>
        <dbReference type="ChEBI" id="CHEBI:15589"/>
        <dbReference type="ChEBI" id="CHEBI:29806"/>
        <dbReference type="EC" id="4.2.1.2"/>
    </reaction>
</comment>
<comment type="pathway">
    <text evidence="1">Carbohydrate metabolism; tricarboxylic acid cycle; (S)-malate from fumarate: step 1/1.</text>
</comment>
<comment type="subunit">
    <text evidence="1">Homotetramer.</text>
</comment>
<comment type="subcellular location">
    <subcellularLocation>
        <location evidence="1">Cytoplasm</location>
    </subcellularLocation>
</comment>
<comment type="miscellaneous">
    <text evidence="1">There are 2 substrate-binding sites: the catalytic A site, and the non-catalytic B site that may play a role in the transfer of substrate or product between the active site and the solvent. Alternatively, the B site may bind allosteric effectors.</text>
</comment>
<comment type="similarity">
    <text evidence="1">Belongs to the class-II fumarase/aspartase family. Fumarase subfamily.</text>
</comment>
<proteinExistence type="inferred from homology"/>
<reference key="1">
    <citation type="journal article" date="2002" name="Lancet">
        <title>Genome and virulence determinants of high virulence community-acquired MRSA.</title>
        <authorList>
            <person name="Baba T."/>
            <person name="Takeuchi F."/>
            <person name="Kuroda M."/>
            <person name="Yuzawa H."/>
            <person name="Aoki K."/>
            <person name="Oguchi A."/>
            <person name="Nagai Y."/>
            <person name="Iwama N."/>
            <person name="Asano K."/>
            <person name="Naimi T."/>
            <person name="Kuroda H."/>
            <person name="Cui L."/>
            <person name="Yamamoto K."/>
            <person name="Hiramatsu K."/>
        </authorList>
    </citation>
    <scope>NUCLEOTIDE SEQUENCE [LARGE SCALE GENOMIC DNA]</scope>
    <source>
        <strain>MW2</strain>
    </source>
</reference>
<sequence length="461" mass="51146">MSVRIEHDTFGEIEVPADKYWGAQTERSKRNFPVGKERMPIEVVYGFAQLKRAAALANFDLGKLSEAKKDAIVYACDQILSGELDEHFPLVVWQTGSGTQSNMNVNEVVSYVANMYLKDHQIDESIHPNDDVNKSQSSNDTFPTAMHVALYQEVETKLEPALKLLRNTLKEKEDKFDSIIKIGRTHLQDATPIKLGQEISGWRYMLDRCEIMLSESKKHILNLAIGGTAVGTGINAHPEFGDKVAHYISENTGYPFVSSENKFHALTAHDEVVQLHGTLKALAGDLMKIANDVRWLASGPRAGLAEISIPENEPGSSIMPGKVNPTQCEMLTMVAVQVMGNDTVVGFASSQGNFELNVYKPVIMHNTLQSIYLLADGMETFNNNCAVGIEPIEENIDNYLNQSLMLVTALNPHIGYEKAAQIAKKAHKEGLTLKESAIQTGYVTEEQFEAWIKPEDMVDPH</sequence>
<protein>
    <recommendedName>
        <fullName evidence="1">Fumarate hydratase class II</fullName>
        <shortName evidence="1">Fumarase C</shortName>
        <ecNumber evidence="1">4.2.1.2</ecNumber>
    </recommendedName>
    <alternativeName>
        <fullName evidence="1">Aerobic fumarase</fullName>
    </alternativeName>
    <alternativeName>
        <fullName evidence="1">Iron-independent fumarase</fullName>
    </alternativeName>
</protein>
<organism>
    <name type="scientific">Staphylococcus aureus (strain MW2)</name>
    <dbReference type="NCBI Taxonomy" id="196620"/>
    <lineage>
        <taxon>Bacteria</taxon>
        <taxon>Bacillati</taxon>
        <taxon>Bacillota</taxon>
        <taxon>Bacilli</taxon>
        <taxon>Bacillales</taxon>
        <taxon>Staphylococcaceae</taxon>
        <taxon>Staphylococcus</taxon>
    </lineage>
</organism>
<gene>
    <name evidence="1" type="primary">fumC</name>
    <name type="synonym">citG</name>
    <name type="ordered locus">MW1792</name>
</gene>
<keyword id="KW-0963">Cytoplasm</keyword>
<keyword id="KW-0456">Lyase</keyword>
<keyword id="KW-0816">Tricarboxylic acid cycle</keyword>
<accession>Q8NVV1</accession>
<name>FUMC_STAAW</name>
<evidence type="ECO:0000255" key="1">
    <source>
        <dbReference type="HAMAP-Rule" id="MF_00743"/>
    </source>
</evidence>